<proteinExistence type="evidence at protein level"/>
<sequence>MFSNRLPPPKHSQGRVSTALSSDRVEPAILTDQIAKNVKLDDFIPKRQSNFELSVPLPTKAEIQECTARTKSYIQRLVNAKLANSNNRASSRYVTETHQAPANLLLNNSHHIEVVSKQMDPLLPRFVGKKARKVVAPTENDEVVPVLHMDGSNDRGEADPNEWKIPAAVSNWKNPNGYTVALERRVGKALDNENNTINDGFMKLSEALENADKKARQEIRSKMELKRLAMEQEMLAKESKLKELSQRARYHNGTPQTGAIVKPKKQTSTVARLKELAYSQGRDVSEKIILGAAKRSEQPDLQYDSRFFTRGANASAKRHEDQVYDNPLFVQQDIESIYKTNYEKLDEAVNVKSEGASGSHGPIQFTKAESDDKSDNYGA</sequence>
<dbReference type="EMBL" id="X62577">
    <property type="protein sequence ID" value="CAA44455.1"/>
    <property type="status" value="ALT_FRAME"/>
    <property type="molecule type" value="Genomic_DNA"/>
</dbReference>
<dbReference type="EMBL" id="U12980">
    <property type="protein sequence ID" value="AAC05000.1"/>
    <property type="molecule type" value="Genomic_DNA"/>
</dbReference>
<dbReference type="EMBL" id="BK006935">
    <property type="protein sequence ID" value="DAA06956.1"/>
    <property type="molecule type" value="Genomic_DNA"/>
</dbReference>
<dbReference type="PIR" id="S23409">
    <property type="entry name" value="S23409"/>
</dbReference>
<dbReference type="RefSeq" id="NP_009370.1">
    <property type="nucleotide sequence ID" value="NM_001178177.1"/>
</dbReference>
<dbReference type="PDB" id="5GM6">
    <property type="method" value="EM"/>
    <property type="resolution" value="3.50 A"/>
    <property type="chains" value="P=1-379"/>
</dbReference>
<dbReference type="PDB" id="5GMK">
    <property type="method" value="EM"/>
    <property type="resolution" value="3.40 A"/>
    <property type="chains" value="P=1-379"/>
</dbReference>
<dbReference type="PDB" id="5LJ3">
    <property type="method" value="EM"/>
    <property type="resolution" value="3.80 A"/>
    <property type="chains" value="K=1-379"/>
</dbReference>
<dbReference type="PDB" id="5LJ5">
    <property type="method" value="EM"/>
    <property type="resolution" value="3.80 A"/>
    <property type="chains" value="K=1-379"/>
</dbReference>
<dbReference type="PDB" id="5LQW">
    <property type="method" value="EM"/>
    <property type="resolution" value="5.80 A"/>
    <property type="chains" value="M=1-379"/>
</dbReference>
<dbReference type="PDB" id="5MPS">
    <property type="method" value="EM"/>
    <property type="resolution" value="3.85 A"/>
    <property type="chains" value="K=1-379"/>
</dbReference>
<dbReference type="PDB" id="5MQ0">
    <property type="method" value="EM"/>
    <property type="resolution" value="4.17 A"/>
    <property type="chains" value="K=1-379"/>
</dbReference>
<dbReference type="PDB" id="5WSG">
    <property type="method" value="EM"/>
    <property type="resolution" value="4.00 A"/>
    <property type="chains" value="P=1-379"/>
</dbReference>
<dbReference type="PDB" id="5Y88">
    <property type="method" value="EM"/>
    <property type="resolution" value="3.70 A"/>
    <property type="chains" value="Q=1-379"/>
</dbReference>
<dbReference type="PDB" id="5YLZ">
    <property type="method" value="EM"/>
    <property type="resolution" value="3.60 A"/>
    <property type="chains" value="Q=1-379"/>
</dbReference>
<dbReference type="PDB" id="6BK8">
    <property type="method" value="EM"/>
    <property type="resolution" value="3.30 A"/>
    <property type="chains" value="E=1-379"/>
</dbReference>
<dbReference type="PDB" id="6EXN">
    <property type="method" value="EM"/>
    <property type="resolution" value="3.70 A"/>
    <property type="chains" value="K=1-379"/>
</dbReference>
<dbReference type="PDB" id="6J6G">
    <property type="method" value="EM"/>
    <property type="resolution" value="3.20 A"/>
    <property type="chains" value="P=1-379"/>
</dbReference>
<dbReference type="PDB" id="6J6H">
    <property type="method" value="EM"/>
    <property type="resolution" value="3.60 A"/>
    <property type="chains" value="P=1-379"/>
</dbReference>
<dbReference type="PDB" id="6J6N">
    <property type="method" value="EM"/>
    <property type="resolution" value="3.86 A"/>
    <property type="chains" value="P=1-379"/>
</dbReference>
<dbReference type="PDB" id="6J6Q">
    <property type="method" value="EM"/>
    <property type="resolution" value="3.70 A"/>
    <property type="chains" value="P=1-379"/>
</dbReference>
<dbReference type="PDB" id="9DTR">
    <property type="method" value="EM"/>
    <property type="resolution" value="2.31 A"/>
    <property type="chains" value="K=1-379"/>
</dbReference>
<dbReference type="PDBsum" id="5GM6"/>
<dbReference type="PDBsum" id="5GMK"/>
<dbReference type="PDBsum" id="5LJ3"/>
<dbReference type="PDBsum" id="5LJ5"/>
<dbReference type="PDBsum" id="5LQW"/>
<dbReference type="PDBsum" id="5MPS"/>
<dbReference type="PDBsum" id="5MQ0"/>
<dbReference type="PDBsum" id="5WSG"/>
<dbReference type="PDBsum" id="5Y88"/>
<dbReference type="PDBsum" id="5YLZ"/>
<dbReference type="PDBsum" id="6BK8"/>
<dbReference type="PDBsum" id="6EXN"/>
<dbReference type="PDBsum" id="6J6G"/>
<dbReference type="PDBsum" id="6J6H"/>
<dbReference type="PDBsum" id="6J6N"/>
<dbReference type="PDBsum" id="6J6Q"/>
<dbReference type="PDBsum" id="9DTR"/>
<dbReference type="EMDB" id="EMD-0686"/>
<dbReference type="EMDB" id="EMD-0687"/>
<dbReference type="EMDB" id="EMD-0691"/>
<dbReference type="EMDB" id="EMD-0692"/>
<dbReference type="EMDB" id="EMD-3539"/>
<dbReference type="EMDB" id="EMD-3541"/>
<dbReference type="EMDB" id="EMD-3979"/>
<dbReference type="EMDB" id="EMD-4055"/>
<dbReference type="EMDB" id="EMD-4057"/>
<dbReference type="EMDB" id="EMD-47157"/>
<dbReference type="EMDB" id="EMD-6817"/>
<dbReference type="EMDB" id="EMD-6839"/>
<dbReference type="EMDB" id="EMD-7109"/>
<dbReference type="EMDB" id="EMD-9524"/>
<dbReference type="EMDB" id="EMD-9525"/>
<dbReference type="SMR" id="P28004"/>
<dbReference type="BioGRID" id="31734">
    <property type="interactions" value="273"/>
</dbReference>
<dbReference type="ComplexPortal" id="CPX-1651">
    <property type="entry name" value="PRP19-associated complex"/>
</dbReference>
<dbReference type="DIP" id="DIP-2774N"/>
<dbReference type="FunCoup" id="P28004">
    <property type="interactions" value="1152"/>
</dbReference>
<dbReference type="IntAct" id="P28004">
    <property type="interactions" value="65"/>
</dbReference>
<dbReference type="MINT" id="P28004"/>
<dbReference type="STRING" id="4932.YAL032C"/>
<dbReference type="iPTMnet" id="P28004"/>
<dbReference type="PaxDb" id="4932-YAL032C"/>
<dbReference type="PeptideAtlas" id="P28004"/>
<dbReference type="EnsemblFungi" id="YAL032C_mRNA">
    <property type="protein sequence ID" value="YAL032C"/>
    <property type="gene ID" value="YAL032C"/>
</dbReference>
<dbReference type="GeneID" id="851201"/>
<dbReference type="KEGG" id="sce:YAL032C"/>
<dbReference type="AGR" id="SGD:S000000030"/>
<dbReference type="SGD" id="S000000030">
    <property type="gene designation" value="PRP45"/>
</dbReference>
<dbReference type="VEuPathDB" id="FungiDB:YAL032C"/>
<dbReference type="eggNOG" id="KOG2441">
    <property type="taxonomic scope" value="Eukaryota"/>
</dbReference>
<dbReference type="GeneTree" id="ENSGT00390000010423"/>
<dbReference type="HOGENOM" id="CLU_006601_3_1_1"/>
<dbReference type="InParanoid" id="P28004"/>
<dbReference type="OMA" id="EDQVYDN"/>
<dbReference type="OrthoDB" id="666364at2759"/>
<dbReference type="BioCyc" id="YEAST:G3O-28843-MONOMER"/>
<dbReference type="BioGRID-ORCS" id="851201">
    <property type="hits" value="5 hits in 10 CRISPR screens"/>
</dbReference>
<dbReference type="PRO" id="PR:P28004"/>
<dbReference type="Proteomes" id="UP000002311">
    <property type="component" value="Chromosome I"/>
</dbReference>
<dbReference type="RNAct" id="P28004">
    <property type="molecule type" value="protein"/>
</dbReference>
<dbReference type="GO" id="GO:0005634">
    <property type="term" value="C:nucleus"/>
    <property type="evidence" value="ECO:0000314"/>
    <property type="project" value="SGD"/>
</dbReference>
<dbReference type="GO" id="GO:0071014">
    <property type="term" value="C:post-mRNA release spliceosomal complex"/>
    <property type="evidence" value="ECO:0000314"/>
    <property type="project" value="SGD"/>
</dbReference>
<dbReference type="GO" id="GO:0000974">
    <property type="term" value="C:Prp19 complex"/>
    <property type="evidence" value="ECO:0000353"/>
    <property type="project" value="ComplexPortal"/>
</dbReference>
<dbReference type="GO" id="GO:0071006">
    <property type="term" value="C:U2-type catalytic step 1 spliceosome"/>
    <property type="evidence" value="ECO:0000314"/>
    <property type="project" value="SGD"/>
</dbReference>
<dbReference type="GO" id="GO:0071007">
    <property type="term" value="C:U2-type catalytic step 2 spliceosome"/>
    <property type="evidence" value="ECO:0000314"/>
    <property type="project" value="SGD"/>
</dbReference>
<dbReference type="GO" id="GO:0000350">
    <property type="term" value="P:generation of catalytic spliceosome for second transesterification step"/>
    <property type="evidence" value="ECO:0000315"/>
    <property type="project" value="SGD"/>
</dbReference>
<dbReference type="GO" id="GO:0000398">
    <property type="term" value="P:mRNA splicing, via spliceosome"/>
    <property type="evidence" value="ECO:0000303"/>
    <property type="project" value="ComplexPortal"/>
</dbReference>
<dbReference type="InterPro" id="IPR017862">
    <property type="entry name" value="SKI-int_prot_SKIP"/>
</dbReference>
<dbReference type="InterPro" id="IPR004015">
    <property type="entry name" value="SKI-int_prot_SKIP_SNW-dom"/>
</dbReference>
<dbReference type="PANTHER" id="PTHR12096">
    <property type="entry name" value="NUCLEAR PROTEIN SKIP-RELATED"/>
    <property type="match status" value="1"/>
</dbReference>
<dbReference type="Pfam" id="PF02731">
    <property type="entry name" value="SKIP_SNW"/>
    <property type="match status" value="1"/>
</dbReference>
<gene>
    <name type="primary">PRP45</name>
    <name type="synonym">FUN20</name>
    <name type="ordered locus">YAL032C</name>
</gene>
<accession>P28004</accession>
<accession>D6VPI6</accession>
<name>PRP45_YEAST</name>
<reference key="1">
    <citation type="journal article" date="1992" name="J. Mol. Biol.">
        <title>Molecular analysis of Saccharomyces cerevisiae chromosome I. On the number of genes and the identification of essential genes using temperature-sensitive-lethal mutations.</title>
        <authorList>
            <person name="Harris S.D."/>
            <person name="Cheng J."/>
            <person name="Pugh T.A."/>
            <person name="Pringle J.R."/>
        </authorList>
    </citation>
    <scope>NUCLEOTIDE SEQUENCE [GENOMIC DNA]</scope>
</reference>
<reference key="2">
    <citation type="journal article" date="1995" name="Proc. Natl. Acad. Sci. U.S.A.">
        <title>The nucleotide sequence of chromosome I from Saccharomyces cerevisiae.</title>
        <authorList>
            <person name="Bussey H."/>
            <person name="Kaback D.B."/>
            <person name="Zhong W.-W."/>
            <person name="Vo D.H."/>
            <person name="Clark M.W."/>
            <person name="Fortin N."/>
            <person name="Hall J."/>
            <person name="Ouellette B.F.F."/>
            <person name="Keng T."/>
            <person name="Barton A.B."/>
            <person name="Su Y."/>
            <person name="Davies C.J."/>
            <person name="Storms R.K."/>
        </authorList>
    </citation>
    <scope>NUCLEOTIDE SEQUENCE [LARGE SCALE GENOMIC DNA]</scope>
    <source>
        <strain>ATCC 204508 / S288c</strain>
    </source>
</reference>
<reference key="3">
    <citation type="submission" date="1996-04" db="EMBL/GenBank/DDBJ databases">
        <authorList>
            <person name="Vo D.T."/>
        </authorList>
    </citation>
    <scope>SEQUENCE REVISION</scope>
</reference>
<reference key="4">
    <citation type="journal article" date="2014" name="G3 (Bethesda)">
        <title>The reference genome sequence of Saccharomyces cerevisiae: Then and now.</title>
        <authorList>
            <person name="Engel S.R."/>
            <person name="Dietrich F.S."/>
            <person name="Fisk D.G."/>
            <person name="Binkley G."/>
            <person name="Balakrishnan R."/>
            <person name="Costanzo M.C."/>
            <person name="Dwight S.S."/>
            <person name="Hitz B.C."/>
            <person name="Karra K."/>
            <person name="Nash R.S."/>
            <person name="Weng S."/>
            <person name="Wong E.D."/>
            <person name="Lloyd P."/>
            <person name="Skrzypek M.S."/>
            <person name="Miyasato S.R."/>
            <person name="Simison M."/>
            <person name="Cherry J.M."/>
        </authorList>
    </citation>
    <scope>GENOME REANNOTATION</scope>
    <source>
        <strain>ATCC 204508 / S288c</strain>
    </source>
</reference>
<reference key="5">
    <citation type="journal article" date="2002" name="J. Biochem.">
        <title>Functional mapping of Saccharomyces cerevisiae Prp45 identifies the SNW domain as essential for viability.</title>
        <authorList>
            <person name="Martinkova K."/>
            <person name="Lebduska P."/>
            <person name="Skruzny M."/>
            <person name="Folk P."/>
            <person name="Puta F."/>
        </authorList>
    </citation>
    <scope>FUNCTION</scope>
    <scope>DOMAIN</scope>
    <scope>SUBCELLULAR LOCATION</scope>
</reference>
<reference key="6">
    <citation type="journal article" date="2002" name="Mol. Cell. Biol.">
        <title>Proteomics analysis reveals stable multiprotein complexes in both fission and budding yeasts containing Myb-related Cdc5p/Cef1p, novel pre-mRNA splicing factors, and snRNAs.</title>
        <authorList>
            <person name="Ohi M.D."/>
            <person name="Link A.J."/>
            <person name="Ren L."/>
            <person name="Jennings J.L."/>
            <person name="McDonald W.H."/>
            <person name="Gould K.L."/>
        </authorList>
    </citation>
    <scope>IDENTIFICATION IN THE CWC COMPLEX</scope>
    <scope>IDENTIFICATION BY MASS SPECTROMETRY</scope>
</reference>
<reference key="7">
    <citation type="journal article" date="2003" name="Mol. Cell">
        <title>Assigning function to yeast proteins by integration of technologies.</title>
        <authorList>
            <person name="Hazbun T.R."/>
            <person name="Malmstroem L."/>
            <person name="Anderson S."/>
            <person name="Graczyk B.J."/>
            <person name="Fox B."/>
            <person name="Riffle M."/>
            <person name="Sundin B.A."/>
            <person name="Aranda J.D."/>
            <person name="McDonald W.H."/>
            <person name="Chiu C.-H."/>
            <person name="Snydsman B.E."/>
            <person name="Bradley P."/>
            <person name="Muller E.G.D."/>
            <person name="Fields S."/>
            <person name="Baker D."/>
            <person name="Yates J.R. III"/>
            <person name="Davis T.N."/>
        </authorList>
    </citation>
    <scope>IDENTIFICATION BY MASS SPECTROMETRY</scope>
    <scope>INTERACTION WITH SPP382</scope>
</reference>
<reference key="8">
    <citation type="journal article" date="2003" name="Nature">
        <title>Global analysis of protein localization in budding yeast.</title>
        <authorList>
            <person name="Huh W.-K."/>
            <person name="Falvo J.V."/>
            <person name="Gerke L.C."/>
            <person name="Carroll A.S."/>
            <person name="Howson R.W."/>
            <person name="Weissman J.S."/>
            <person name="O'Shea E.K."/>
        </authorList>
    </citation>
    <scope>SUBCELLULAR LOCATION [LARGE SCALE ANALYSIS]</scope>
</reference>
<reference key="9">
    <citation type="journal article" date="2003" name="Nature">
        <title>Global analysis of protein expression in yeast.</title>
        <authorList>
            <person name="Ghaemmaghami S."/>
            <person name="Huh W.-K."/>
            <person name="Bower K."/>
            <person name="Howson R.W."/>
            <person name="Belle A."/>
            <person name="Dephoure N."/>
            <person name="O'Shea E.K."/>
            <person name="Weissman J.S."/>
        </authorList>
    </citation>
    <scope>LEVEL OF PROTEIN EXPRESSION [LARGE SCALE ANALYSIS]</scope>
</reference>
<reference key="10">
    <citation type="journal article" date="2003" name="RNA">
        <title>Identification and characterization of Prp45p and Prp46p, essential pre-mRNA splicing factors.</title>
        <authorList>
            <person name="Albers M."/>
            <person name="Diment A."/>
            <person name="Muraru M."/>
            <person name="Russell C.S."/>
            <person name="Beggs J.D."/>
        </authorList>
    </citation>
    <scope>FUNCTION</scope>
    <scope>INTERACTION WITH CLF1; PRP22 AND PRP46</scope>
    <scope>ASSOCIATION WITH THE SPLICEOSOME</scope>
</reference>
<keyword id="KW-0002">3D-structure</keyword>
<keyword id="KW-0507">mRNA processing</keyword>
<keyword id="KW-0508">mRNA splicing</keyword>
<keyword id="KW-0539">Nucleus</keyword>
<keyword id="KW-1185">Reference proteome</keyword>
<keyword id="KW-0747">Spliceosome</keyword>
<feature type="chain" id="PRO_0000084825" description="Pre-mRNA-processing protein 45">
    <location>
        <begin position="1"/>
        <end position="379"/>
    </location>
</feature>
<feature type="region of interest" description="Disordered" evidence="1">
    <location>
        <begin position="1"/>
        <end position="22"/>
    </location>
</feature>
<feature type="region of interest" description="Disordered" evidence="1">
    <location>
        <begin position="353"/>
        <end position="379"/>
    </location>
</feature>
<feature type="compositionally biased region" description="Pro residues" evidence="1">
    <location>
        <begin position="1"/>
        <end position="10"/>
    </location>
</feature>
<feature type="compositionally biased region" description="Basic and acidic residues" evidence="1">
    <location>
        <begin position="368"/>
        <end position="379"/>
    </location>
</feature>
<feature type="helix" evidence="9">
    <location>
        <begin position="30"/>
        <end position="33"/>
    </location>
</feature>
<feature type="turn" evidence="11">
    <location>
        <begin position="34"/>
        <end position="37"/>
    </location>
</feature>
<feature type="helix" evidence="11">
    <location>
        <begin position="40"/>
        <end position="42"/>
    </location>
</feature>
<feature type="helix" evidence="11">
    <location>
        <begin position="46"/>
        <end position="49"/>
    </location>
</feature>
<feature type="helix" evidence="11">
    <location>
        <begin position="60"/>
        <end position="83"/>
    </location>
</feature>
<feature type="strand" evidence="9">
    <location>
        <begin position="84"/>
        <end position="86"/>
    </location>
</feature>
<feature type="helix" evidence="11">
    <location>
        <begin position="88"/>
        <end position="92"/>
    </location>
</feature>
<feature type="strand" evidence="11">
    <location>
        <begin position="103"/>
        <end position="106"/>
    </location>
</feature>
<feature type="turn" evidence="11">
    <location>
        <begin position="107"/>
        <end position="109"/>
    </location>
</feature>
<feature type="strand" evidence="11">
    <location>
        <begin position="110"/>
        <end position="116"/>
    </location>
</feature>
<feature type="strand" evidence="10">
    <location>
        <begin position="121"/>
        <end position="123"/>
    </location>
</feature>
<feature type="helix" evidence="10">
    <location>
        <begin position="161"/>
        <end position="163"/>
    </location>
</feature>
<feature type="helix" evidence="11">
    <location>
        <begin position="182"/>
        <end position="185"/>
    </location>
</feature>
<feature type="helix" evidence="11">
    <location>
        <begin position="199"/>
        <end position="223"/>
    </location>
</feature>
<comment type="function">
    <text evidence="3 4">Involved in pre-mRNA splicing. Associated with the spliceosome throughout the splicing reactions, until after the second catalytic step.</text>
</comment>
<comment type="subunit">
    <text evidence="2 4 7">Belongs to the CWC complex (or CEF1-associated complex), a spliceosome sub-complex reminiscent of a late-stage spliceosome composed of the U2, U5 and U6 snRNAs and at least BUD13, BUD31, BRR2, CDC40, CEF1, CLF1, CUS1, CWC2, CWC15, CWC21, CWC22, CWC23, CWC24, CWC25, CWC27, ECM2, HSH155, IST3, ISY1, LEA1, MSL1, NTC20, PRP8, PRP9, PRP11, PRP19, PRP21, PRP22, PRP45, PRP46, SLU7, SMB1, SMD1, SMD2, SMD3, SMX2, SMX3, SNT309, SNU114, SPP2, SYF1, SYF2, RSE1 and YJU2. Interacts with CLF1, PRP22 and PRP46. Interacts with SPP382.</text>
</comment>
<comment type="interaction">
    <interactant intactId="EBI-20640">
        <id>P28004</id>
    </interactant>
    <interactant intactId="EBI-710">
        <id>Q12417</id>
        <label>PRP46</label>
    </interactant>
    <organismsDiffer>false</organismsDiffer>
    <experiments>5</experiments>
</comment>
<comment type="interaction">
    <interactant intactId="EBI-20640">
        <id>P28004</id>
    </interactant>
    <interactant intactId="EBI-540">
        <id>Q04048</id>
        <label>SYF1</label>
    </interactant>
    <organismsDiffer>false</organismsDiffer>
    <experiments>4</experiments>
</comment>
<comment type="interaction">
    <interactant intactId="EBI-20640">
        <id>P28004</id>
    </interactant>
    <interactant intactId="EBI-33827">
        <id>Q06137</id>
        <label>YLR345W</label>
    </interactant>
    <organismsDiffer>false</organismsDiffer>
    <experiments>3</experiments>
</comment>
<comment type="subcellular location">
    <subcellularLocation>
        <location evidence="3 5">Nucleus</location>
    </subcellularLocation>
</comment>
<comment type="miscellaneous">
    <text evidence="6">Present with 1670 molecules/cell in log phase SD medium.</text>
</comment>
<comment type="similarity">
    <text evidence="8">Belongs to the SNW family.</text>
</comment>
<comment type="sequence caution" evidence="8">
    <conflict type="frameshift">
        <sequence resource="EMBL-CDS" id="CAA44455"/>
    </conflict>
</comment>
<protein>
    <recommendedName>
        <fullName>Pre-mRNA-processing protein 45</fullName>
    </recommendedName>
</protein>
<organism>
    <name type="scientific">Saccharomyces cerevisiae (strain ATCC 204508 / S288c)</name>
    <name type="common">Baker's yeast</name>
    <dbReference type="NCBI Taxonomy" id="559292"/>
    <lineage>
        <taxon>Eukaryota</taxon>
        <taxon>Fungi</taxon>
        <taxon>Dikarya</taxon>
        <taxon>Ascomycota</taxon>
        <taxon>Saccharomycotina</taxon>
        <taxon>Saccharomycetes</taxon>
        <taxon>Saccharomycetales</taxon>
        <taxon>Saccharomycetaceae</taxon>
        <taxon>Saccharomyces</taxon>
    </lineage>
</organism>
<evidence type="ECO:0000256" key="1">
    <source>
        <dbReference type="SAM" id="MobiDB-lite"/>
    </source>
</evidence>
<evidence type="ECO:0000269" key="2">
    <source>
    </source>
</evidence>
<evidence type="ECO:0000269" key="3">
    <source>
    </source>
</evidence>
<evidence type="ECO:0000269" key="4">
    <source>
    </source>
</evidence>
<evidence type="ECO:0000269" key="5">
    <source>
    </source>
</evidence>
<evidence type="ECO:0000269" key="6">
    <source>
    </source>
</evidence>
<evidence type="ECO:0000269" key="7">
    <source>
    </source>
</evidence>
<evidence type="ECO:0000305" key="8"/>
<evidence type="ECO:0007829" key="9">
    <source>
        <dbReference type="PDB" id="6BK8"/>
    </source>
</evidence>
<evidence type="ECO:0007829" key="10">
    <source>
        <dbReference type="PDB" id="6J6G"/>
    </source>
</evidence>
<evidence type="ECO:0007829" key="11">
    <source>
        <dbReference type="PDB" id="9DTR"/>
    </source>
</evidence>